<keyword id="KW-0028">Amino-acid biosynthesis</keyword>
<keyword id="KW-0057">Aromatic amino acid biosynthesis</keyword>
<keyword id="KW-0067">ATP-binding</keyword>
<keyword id="KW-0963">Cytoplasm</keyword>
<keyword id="KW-0418">Kinase</keyword>
<keyword id="KW-0460">Magnesium</keyword>
<keyword id="KW-0479">Metal-binding</keyword>
<keyword id="KW-0547">Nucleotide-binding</keyword>
<keyword id="KW-0808">Transferase</keyword>
<dbReference type="EC" id="2.7.1.71" evidence="1"/>
<dbReference type="EMBL" id="CP001581">
    <property type="protein sequence ID" value="ACO83792.1"/>
    <property type="molecule type" value="Genomic_DNA"/>
</dbReference>
<dbReference type="RefSeq" id="WP_012703881.1">
    <property type="nucleotide sequence ID" value="NC_012563.1"/>
</dbReference>
<dbReference type="SMR" id="C1FPC6"/>
<dbReference type="KEGG" id="cby:CLM_2116"/>
<dbReference type="eggNOG" id="COG0703">
    <property type="taxonomic scope" value="Bacteria"/>
</dbReference>
<dbReference type="HOGENOM" id="CLU_057607_4_0_9"/>
<dbReference type="UniPathway" id="UPA00053">
    <property type="reaction ID" value="UER00088"/>
</dbReference>
<dbReference type="Proteomes" id="UP000001374">
    <property type="component" value="Chromosome"/>
</dbReference>
<dbReference type="GO" id="GO:0005829">
    <property type="term" value="C:cytosol"/>
    <property type="evidence" value="ECO:0007669"/>
    <property type="project" value="TreeGrafter"/>
</dbReference>
<dbReference type="GO" id="GO:0005524">
    <property type="term" value="F:ATP binding"/>
    <property type="evidence" value="ECO:0007669"/>
    <property type="project" value="UniProtKB-UniRule"/>
</dbReference>
<dbReference type="GO" id="GO:0000287">
    <property type="term" value="F:magnesium ion binding"/>
    <property type="evidence" value="ECO:0007669"/>
    <property type="project" value="UniProtKB-UniRule"/>
</dbReference>
<dbReference type="GO" id="GO:0004765">
    <property type="term" value="F:shikimate kinase activity"/>
    <property type="evidence" value="ECO:0007669"/>
    <property type="project" value="UniProtKB-UniRule"/>
</dbReference>
<dbReference type="GO" id="GO:0008652">
    <property type="term" value="P:amino acid biosynthetic process"/>
    <property type="evidence" value="ECO:0007669"/>
    <property type="project" value="UniProtKB-KW"/>
</dbReference>
<dbReference type="GO" id="GO:0009073">
    <property type="term" value="P:aromatic amino acid family biosynthetic process"/>
    <property type="evidence" value="ECO:0007669"/>
    <property type="project" value="UniProtKB-KW"/>
</dbReference>
<dbReference type="GO" id="GO:0009423">
    <property type="term" value="P:chorismate biosynthetic process"/>
    <property type="evidence" value="ECO:0007669"/>
    <property type="project" value="UniProtKB-UniRule"/>
</dbReference>
<dbReference type="CDD" id="cd00464">
    <property type="entry name" value="SK"/>
    <property type="match status" value="1"/>
</dbReference>
<dbReference type="FunFam" id="3.40.50.300:FF:002322">
    <property type="entry name" value="Shikimate kinase"/>
    <property type="match status" value="1"/>
</dbReference>
<dbReference type="Gene3D" id="3.40.50.300">
    <property type="entry name" value="P-loop containing nucleotide triphosphate hydrolases"/>
    <property type="match status" value="1"/>
</dbReference>
<dbReference type="HAMAP" id="MF_00109">
    <property type="entry name" value="Shikimate_kinase"/>
    <property type="match status" value="1"/>
</dbReference>
<dbReference type="InterPro" id="IPR027417">
    <property type="entry name" value="P-loop_NTPase"/>
</dbReference>
<dbReference type="InterPro" id="IPR031322">
    <property type="entry name" value="Shikimate/glucono_kinase"/>
</dbReference>
<dbReference type="InterPro" id="IPR000623">
    <property type="entry name" value="Shikimate_kinase/TSH1"/>
</dbReference>
<dbReference type="PANTHER" id="PTHR21087">
    <property type="entry name" value="SHIKIMATE KINASE"/>
    <property type="match status" value="1"/>
</dbReference>
<dbReference type="PANTHER" id="PTHR21087:SF16">
    <property type="entry name" value="SHIKIMATE KINASE 1, CHLOROPLASTIC"/>
    <property type="match status" value="1"/>
</dbReference>
<dbReference type="Pfam" id="PF01202">
    <property type="entry name" value="SKI"/>
    <property type="match status" value="1"/>
</dbReference>
<dbReference type="PRINTS" id="PR01100">
    <property type="entry name" value="SHIKIMTKNASE"/>
</dbReference>
<dbReference type="SUPFAM" id="SSF52540">
    <property type="entry name" value="P-loop containing nucleoside triphosphate hydrolases"/>
    <property type="match status" value="1"/>
</dbReference>
<comment type="function">
    <text evidence="1">Catalyzes the specific phosphorylation of the 3-hydroxyl group of shikimic acid using ATP as a cosubstrate.</text>
</comment>
<comment type="catalytic activity">
    <reaction evidence="1">
        <text>shikimate + ATP = 3-phosphoshikimate + ADP + H(+)</text>
        <dbReference type="Rhea" id="RHEA:13121"/>
        <dbReference type="ChEBI" id="CHEBI:15378"/>
        <dbReference type="ChEBI" id="CHEBI:30616"/>
        <dbReference type="ChEBI" id="CHEBI:36208"/>
        <dbReference type="ChEBI" id="CHEBI:145989"/>
        <dbReference type="ChEBI" id="CHEBI:456216"/>
        <dbReference type="EC" id="2.7.1.71"/>
    </reaction>
</comment>
<comment type="cofactor">
    <cofactor evidence="1">
        <name>Mg(2+)</name>
        <dbReference type="ChEBI" id="CHEBI:18420"/>
    </cofactor>
    <text evidence="1">Binds 1 Mg(2+) ion per subunit.</text>
</comment>
<comment type="pathway">
    <text evidence="1">Metabolic intermediate biosynthesis; chorismate biosynthesis; chorismate from D-erythrose 4-phosphate and phosphoenolpyruvate: step 5/7.</text>
</comment>
<comment type="subunit">
    <text evidence="1">Monomer.</text>
</comment>
<comment type="subcellular location">
    <subcellularLocation>
        <location evidence="1">Cytoplasm</location>
    </subcellularLocation>
</comment>
<comment type="similarity">
    <text evidence="1">Belongs to the shikimate kinase family.</text>
</comment>
<evidence type="ECO:0000255" key="1">
    <source>
        <dbReference type="HAMAP-Rule" id="MF_00109"/>
    </source>
</evidence>
<reference key="1">
    <citation type="submission" date="2008-10" db="EMBL/GenBank/DDBJ databases">
        <title>Genome sequence of Clostridium botulinum A2 Kyoto.</title>
        <authorList>
            <person name="Shrivastava S."/>
            <person name="Brinkac L.M."/>
            <person name="Brown J.L."/>
            <person name="Bruce D."/>
            <person name="Detter C.C."/>
            <person name="Johnson E.A."/>
            <person name="Munk C.A."/>
            <person name="Smith L.A."/>
            <person name="Smith T.J."/>
            <person name="Sutton G."/>
            <person name="Brettin T.S."/>
        </authorList>
    </citation>
    <scope>NUCLEOTIDE SEQUENCE [LARGE SCALE GENOMIC DNA]</scope>
    <source>
        <strain>Kyoto / Type A2</strain>
    </source>
</reference>
<proteinExistence type="inferred from homology"/>
<feature type="chain" id="PRO_1000119053" description="Shikimate kinase">
    <location>
        <begin position="1"/>
        <end position="170"/>
    </location>
</feature>
<feature type="binding site" evidence="1">
    <location>
        <begin position="11"/>
        <end position="16"/>
    </location>
    <ligand>
        <name>ATP</name>
        <dbReference type="ChEBI" id="CHEBI:30616"/>
    </ligand>
</feature>
<feature type="binding site" evidence="1">
    <location>
        <position position="15"/>
    </location>
    <ligand>
        <name>Mg(2+)</name>
        <dbReference type="ChEBI" id="CHEBI:18420"/>
    </ligand>
</feature>
<feature type="binding site" evidence="1">
    <location>
        <position position="33"/>
    </location>
    <ligand>
        <name>substrate</name>
    </ligand>
</feature>
<feature type="binding site" evidence="1">
    <location>
        <position position="57"/>
    </location>
    <ligand>
        <name>substrate</name>
    </ligand>
</feature>
<feature type="binding site" evidence="1">
    <location>
        <position position="79"/>
    </location>
    <ligand>
        <name>substrate</name>
    </ligand>
</feature>
<feature type="binding site" evidence="1">
    <location>
        <position position="119"/>
    </location>
    <ligand>
        <name>ATP</name>
        <dbReference type="ChEBI" id="CHEBI:30616"/>
    </ligand>
</feature>
<feature type="binding site" evidence="1">
    <location>
        <position position="137"/>
    </location>
    <ligand>
        <name>substrate</name>
    </ligand>
</feature>
<protein>
    <recommendedName>
        <fullName evidence="1">Shikimate kinase</fullName>
        <shortName evidence="1">SK</shortName>
        <ecNumber evidence="1">2.7.1.71</ecNumber>
    </recommendedName>
</protein>
<sequence length="170" mass="20098">MENIVLIGMPLSGKSTLGRELSKILKYDLIDTDTLIEEMEDKSIKEIFKIYGEDYFREKELKIINKLKKESNKVISTGGGLPIYNKNIYELKKIGFTVYLKVPLEELIKRMVKKEYDTRPLLKNNDTKFLEEMYKNRIEIYEKAHTIICNTNYKESLITIVRTYKKWKGI</sequence>
<gene>
    <name evidence="1" type="primary">aroK</name>
    <name type="ordered locus">CLM_2116</name>
</gene>
<organism>
    <name type="scientific">Clostridium botulinum (strain Kyoto / Type A2)</name>
    <dbReference type="NCBI Taxonomy" id="536232"/>
    <lineage>
        <taxon>Bacteria</taxon>
        <taxon>Bacillati</taxon>
        <taxon>Bacillota</taxon>
        <taxon>Clostridia</taxon>
        <taxon>Eubacteriales</taxon>
        <taxon>Clostridiaceae</taxon>
        <taxon>Clostridium</taxon>
    </lineage>
</organism>
<name>AROK_CLOBJ</name>
<accession>C1FPC6</accession>